<dbReference type="EMBL" id="AJ318018">
    <property type="protein sequence ID" value="CAC85265.1"/>
    <property type="status" value="ALT_INIT"/>
    <property type="molecule type" value="mRNA"/>
</dbReference>
<dbReference type="EMBL" id="AB025620">
    <property type="protein sequence ID" value="BAB08502.1"/>
    <property type="status" value="ALT_SEQ"/>
    <property type="molecule type" value="Genomic_DNA"/>
</dbReference>
<dbReference type="EMBL" id="CP002688">
    <property type="protein sequence ID" value="AED95353.1"/>
    <property type="molecule type" value="Genomic_DNA"/>
</dbReference>
<dbReference type="EMBL" id="AY091113">
    <property type="protein sequence ID" value="AAM14063.1"/>
    <property type="molecule type" value="mRNA"/>
</dbReference>
<dbReference type="EMBL" id="AY084267">
    <property type="protein sequence ID" value="AAM60859.1"/>
    <property type="molecule type" value="mRNA"/>
</dbReference>
<dbReference type="RefSeq" id="NP_568658.1">
    <property type="nucleotide sequence ID" value="NM_123990.3"/>
</dbReference>
<dbReference type="SMR" id="Q8LGH4"/>
<dbReference type="BioGRID" id="19912">
    <property type="interactions" value="20"/>
</dbReference>
<dbReference type="DIP" id="DIP-40462N"/>
<dbReference type="FunCoup" id="Q8LGH4">
    <property type="interactions" value="4794"/>
</dbReference>
<dbReference type="IntAct" id="Q8LGH4">
    <property type="interactions" value="16"/>
</dbReference>
<dbReference type="MINT" id="Q8LGH4"/>
<dbReference type="STRING" id="3702.Q8LGH4"/>
<dbReference type="GlyGen" id="Q8LGH4">
    <property type="glycosylation" value="1 site"/>
</dbReference>
<dbReference type="iPTMnet" id="Q8LGH4"/>
<dbReference type="PaxDb" id="3702-AT5G46210.1"/>
<dbReference type="ProteomicsDB" id="220321"/>
<dbReference type="EnsemblPlants" id="AT5G46210.1">
    <property type="protein sequence ID" value="AT5G46210.1"/>
    <property type="gene ID" value="AT5G46210"/>
</dbReference>
<dbReference type="GeneID" id="834663"/>
<dbReference type="Gramene" id="AT5G46210.1">
    <property type="protein sequence ID" value="AT5G46210.1"/>
    <property type="gene ID" value="AT5G46210"/>
</dbReference>
<dbReference type="KEGG" id="ath:AT5G46210"/>
<dbReference type="Araport" id="AT5G46210"/>
<dbReference type="TAIR" id="AT5G46210">
    <property type="gene designation" value="CUL4"/>
</dbReference>
<dbReference type="eggNOG" id="KOG2167">
    <property type="taxonomic scope" value="Eukaryota"/>
</dbReference>
<dbReference type="HOGENOM" id="CLU_004747_7_2_1"/>
<dbReference type="InParanoid" id="Q8LGH4"/>
<dbReference type="OMA" id="NYQEQTW"/>
<dbReference type="OrthoDB" id="27073at2759"/>
<dbReference type="PhylomeDB" id="Q8LGH4"/>
<dbReference type="BRENDA" id="2.3.2.27">
    <property type="organism ID" value="399"/>
</dbReference>
<dbReference type="UniPathway" id="UPA00143"/>
<dbReference type="PRO" id="PR:Q8LGH4"/>
<dbReference type="Proteomes" id="UP000006548">
    <property type="component" value="Chromosome 5"/>
</dbReference>
<dbReference type="ExpressionAtlas" id="Q8LGH4">
    <property type="expression patterns" value="baseline and differential"/>
</dbReference>
<dbReference type="GO" id="GO:0080008">
    <property type="term" value="C:Cul4-RING E3 ubiquitin ligase complex"/>
    <property type="evidence" value="ECO:0000353"/>
    <property type="project" value="TAIR"/>
</dbReference>
<dbReference type="GO" id="GO:0005634">
    <property type="term" value="C:nucleus"/>
    <property type="evidence" value="ECO:0000314"/>
    <property type="project" value="TAIR"/>
</dbReference>
<dbReference type="GO" id="GO:0000151">
    <property type="term" value="C:ubiquitin ligase complex"/>
    <property type="evidence" value="ECO:0000353"/>
    <property type="project" value="TAIR"/>
</dbReference>
<dbReference type="GO" id="GO:0031625">
    <property type="term" value="F:ubiquitin protein ligase binding"/>
    <property type="evidence" value="ECO:0007669"/>
    <property type="project" value="InterPro"/>
</dbReference>
<dbReference type="GO" id="GO:0009738">
    <property type="term" value="P:abscisic acid-activated signaling pathway"/>
    <property type="evidence" value="ECO:0007669"/>
    <property type="project" value="UniProtKB-KW"/>
</dbReference>
<dbReference type="GO" id="GO:0048825">
    <property type="term" value="P:cotyledon development"/>
    <property type="evidence" value="ECO:0000315"/>
    <property type="project" value="TAIR"/>
</dbReference>
<dbReference type="GO" id="GO:0006281">
    <property type="term" value="P:DNA repair"/>
    <property type="evidence" value="ECO:0000315"/>
    <property type="project" value="TAIR"/>
</dbReference>
<dbReference type="GO" id="GO:0009908">
    <property type="term" value="P:flower development"/>
    <property type="evidence" value="ECO:0000315"/>
    <property type="project" value="TAIR"/>
</dbReference>
<dbReference type="GO" id="GO:0010154">
    <property type="term" value="P:fruit development"/>
    <property type="evidence" value="ECO:0000315"/>
    <property type="project" value="TAIR"/>
</dbReference>
<dbReference type="GO" id="GO:0009755">
    <property type="term" value="P:hormone-mediated signaling pathway"/>
    <property type="evidence" value="ECO:0000315"/>
    <property type="project" value="TAIR"/>
</dbReference>
<dbReference type="GO" id="GO:0048366">
    <property type="term" value="P:leaf development"/>
    <property type="evidence" value="ECO:0000315"/>
    <property type="project" value="TAIR"/>
</dbReference>
<dbReference type="GO" id="GO:0010100">
    <property type="term" value="P:negative regulation of photomorphogenesis"/>
    <property type="evidence" value="ECO:0000315"/>
    <property type="project" value="TAIR"/>
</dbReference>
<dbReference type="GO" id="GO:0009640">
    <property type="term" value="P:photomorphogenesis"/>
    <property type="evidence" value="ECO:0000315"/>
    <property type="project" value="TAIR"/>
</dbReference>
<dbReference type="GO" id="GO:0000209">
    <property type="term" value="P:protein polyubiquitination"/>
    <property type="evidence" value="ECO:0000314"/>
    <property type="project" value="TAIR"/>
</dbReference>
<dbReference type="GO" id="GO:0048367">
    <property type="term" value="P:shoot system development"/>
    <property type="evidence" value="ECO:0000315"/>
    <property type="project" value="TAIR"/>
</dbReference>
<dbReference type="GO" id="GO:0048575">
    <property type="term" value="P:short-day photoperiodism, flowering"/>
    <property type="evidence" value="ECO:0000315"/>
    <property type="project" value="TAIR"/>
</dbReference>
<dbReference type="GO" id="GO:0010182">
    <property type="term" value="P:sugar mediated signaling pathway"/>
    <property type="evidence" value="ECO:0000315"/>
    <property type="project" value="TAIR"/>
</dbReference>
<dbReference type="GO" id="GO:0006511">
    <property type="term" value="P:ubiquitin-dependent protein catabolic process"/>
    <property type="evidence" value="ECO:0007669"/>
    <property type="project" value="InterPro"/>
</dbReference>
<dbReference type="FunFam" id="1.20.1310.10:FF:000001">
    <property type="entry name" value="Cullin 3"/>
    <property type="match status" value="1"/>
</dbReference>
<dbReference type="FunFam" id="1.10.10.10:FF:000050">
    <property type="entry name" value="Cullin 4B"/>
    <property type="match status" value="1"/>
</dbReference>
<dbReference type="FunFam" id="1.20.1310.10:FF:000004">
    <property type="entry name" value="Cullin 4B"/>
    <property type="match status" value="1"/>
</dbReference>
<dbReference type="FunFam" id="1.20.1310.10:FF:000030">
    <property type="entry name" value="Cullin-4"/>
    <property type="match status" value="1"/>
</dbReference>
<dbReference type="FunFam" id="1.20.1310.10:FF:000024">
    <property type="entry name" value="Cullin-4 like"/>
    <property type="match status" value="1"/>
</dbReference>
<dbReference type="FunFam" id="3.30.230.130:FF:000006">
    <property type="entry name" value="Cullin-4 like"/>
    <property type="match status" value="1"/>
</dbReference>
<dbReference type="Gene3D" id="1.20.1310.10">
    <property type="entry name" value="Cullin Repeats"/>
    <property type="match status" value="4"/>
</dbReference>
<dbReference type="Gene3D" id="3.30.230.130">
    <property type="entry name" value="Cullin, Chain C, Domain 2"/>
    <property type="match status" value="1"/>
</dbReference>
<dbReference type="Gene3D" id="1.10.10.10">
    <property type="entry name" value="Winged helix-like DNA-binding domain superfamily/Winged helix DNA-binding domain"/>
    <property type="match status" value="1"/>
</dbReference>
<dbReference type="InterPro" id="IPR045093">
    <property type="entry name" value="Cullin"/>
</dbReference>
<dbReference type="InterPro" id="IPR016157">
    <property type="entry name" value="Cullin_CS"/>
</dbReference>
<dbReference type="InterPro" id="IPR016158">
    <property type="entry name" value="Cullin_homology"/>
</dbReference>
<dbReference type="InterPro" id="IPR036317">
    <property type="entry name" value="Cullin_homology_sf"/>
</dbReference>
<dbReference type="InterPro" id="IPR001373">
    <property type="entry name" value="Cullin_N"/>
</dbReference>
<dbReference type="InterPro" id="IPR019559">
    <property type="entry name" value="Cullin_neddylation_domain"/>
</dbReference>
<dbReference type="InterPro" id="IPR016159">
    <property type="entry name" value="Cullin_repeat-like_dom_sf"/>
</dbReference>
<dbReference type="InterPro" id="IPR036388">
    <property type="entry name" value="WH-like_DNA-bd_sf"/>
</dbReference>
<dbReference type="InterPro" id="IPR036390">
    <property type="entry name" value="WH_DNA-bd_sf"/>
</dbReference>
<dbReference type="PANTHER" id="PTHR11932">
    <property type="entry name" value="CULLIN"/>
    <property type="match status" value="1"/>
</dbReference>
<dbReference type="Pfam" id="PF00888">
    <property type="entry name" value="Cullin"/>
    <property type="match status" value="1"/>
</dbReference>
<dbReference type="Pfam" id="PF10557">
    <property type="entry name" value="Cullin_Nedd8"/>
    <property type="match status" value="1"/>
</dbReference>
<dbReference type="SMART" id="SM00182">
    <property type="entry name" value="CULLIN"/>
    <property type="match status" value="1"/>
</dbReference>
<dbReference type="SMART" id="SM00884">
    <property type="entry name" value="Cullin_Nedd8"/>
    <property type="match status" value="1"/>
</dbReference>
<dbReference type="SUPFAM" id="SSF75632">
    <property type="entry name" value="Cullin homology domain"/>
    <property type="match status" value="1"/>
</dbReference>
<dbReference type="SUPFAM" id="SSF74788">
    <property type="entry name" value="Cullin repeat-like"/>
    <property type="match status" value="1"/>
</dbReference>
<dbReference type="SUPFAM" id="SSF46785">
    <property type="entry name" value="Winged helix' DNA-binding domain"/>
    <property type="match status" value="1"/>
</dbReference>
<dbReference type="PROSITE" id="PS01256">
    <property type="entry name" value="CULLIN_1"/>
    <property type="match status" value="1"/>
</dbReference>
<dbReference type="PROSITE" id="PS50069">
    <property type="entry name" value="CULLIN_2"/>
    <property type="match status" value="1"/>
</dbReference>
<reference key="1">
    <citation type="submission" date="2001-09" db="EMBL/GenBank/DDBJ databases">
        <title>Arabidopsis thaliana mRNA for cullin 4.</title>
        <authorList>
            <person name="Shen W.H."/>
        </authorList>
    </citation>
    <scope>NUCLEOTIDE SEQUENCE [MRNA]</scope>
</reference>
<reference key="2">
    <citation type="submission" date="1999-04" db="EMBL/GenBank/DDBJ databases">
        <title>Structural analysis of Arabidopsis thaliana chromosome 5. XI.</title>
        <authorList>
            <person name="Kaneko T."/>
            <person name="Katoh T."/>
            <person name="Asamizu E."/>
            <person name="Sato S."/>
            <person name="Nakamura Y."/>
            <person name="Kotani H."/>
            <person name="Tabata S."/>
        </authorList>
    </citation>
    <scope>NUCLEOTIDE SEQUENCE [LARGE SCALE GENOMIC DNA]</scope>
    <source>
        <strain>cv. Columbia</strain>
    </source>
</reference>
<reference key="3">
    <citation type="journal article" date="2017" name="Plant J.">
        <title>Araport11: a complete reannotation of the Arabidopsis thaliana reference genome.</title>
        <authorList>
            <person name="Cheng C.Y."/>
            <person name="Krishnakumar V."/>
            <person name="Chan A.P."/>
            <person name="Thibaud-Nissen F."/>
            <person name="Schobel S."/>
            <person name="Town C.D."/>
        </authorList>
    </citation>
    <scope>GENOME REANNOTATION</scope>
    <source>
        <strain>cv. Columbia</strain>
    </source>
</reference>
<reference key="4">
    <citation type="journal article" date="2003" name="Science">
        <title>Empirical analysis of transcriptional activity in the Arabidopsis genome.</title>
        <authorList>
            <person name="Yamada K."/>
            <person name="Lim J."/>
            <person name="Dale J.M."/>
            <person name="Chen H."/>
            <person name="Shinn P."/>
            <person name="Palm C.J."/>
            <person name="Southwick A.M."/>
            <person name="Wu H.C."/>
            <person name="Kim C.J."/>
            <person name="Nguyen M."/>
            <person name="Pham P.K."/>
            <person name="Cheuk R.F."/>
            <person name="Karlin-Newmann G."/>
            <person name="Liu S.X."/>
            <person name="Lam B."/>
            <person name="Sakano H."/>
            <person name="Wu T."/>
            <person name="Yu G."/>
            <person name="Miranda M."/>
            <person name="Quach H.L."/>
            <person name="Tripp M."/>
            <person name="Chang C.H."/>
            <person name="Lee J.M."/>
            <person name="Toriumi M.J."/>
            <person name="Chan M.M."/>
            <person name="Tang C.C."/>
            <person name="Onodera C.S."/>
            <person name="Deng J.M."/>
            <person name="Akiyama K."/>
            <person name="Ansari Y."/>
            <person name="Arakawa T."/>
            <person name="Banh J."/>
            <person name="Banno F."/>
            <person name="Bowser L."/>
            <person name="Brooks S.Y."/>
            <person name="Carninci P."/>
            <person name="Chao Q."/>
            <person name="Choy N."/>
            <person name="Enju A."/>
            <person name="Goldsmith A.D."/>
            <person name="Gurjal M."/>
            <person name="Hansen N.F."/>
            <person name="Hayashizaki Y."/>
            <person name="Johnson-Hopson C."/>
            <person name="Hsuan V.W."/>
            <person name="Iida K."/>
            <person name="Karnes M."/>
            <person name="Khan S."/>
            <person name="Koesema E."/>
            <person name="Ishida J."/>
            <person name="Jiang P.X."/>
            <person name="Jones T."/>
            <person name="Kawai J."/>
            <person name="Kamiya A."/>
            <person name="Meyers C."/>
            <person name="Nakajima M."/>
            <person name="Narusaka M."/>
            <person name="Seki M."/>
            <person name="Sakurai T."/>
            <person name="Satou M."/>
            <person name="Tamse R."/>
            <person name="Vaysberg M."/>
            <person name="Wallender E.K."/>
            <person name="Wong C."/>
            <person name="Yamamura Y."/>
            <person name="Yuan S."/>
            <person name="Shinozaki K."/>
            <person name="Davis R.W."/>
            <person name="Theologis A."/>
            <person name="Ecker J.R."/>
        </authorList>
    </citation>
    <scope>NUCLEOTIDE SEQUENCE [LARGE SCALE MRNA]</scope>
    <source>
        <strain>cv. Columbia</strain>
    </source>
</reference>
<reference key="5">
    <citation type="submission" date="2002-03" db="EMBL/GenBank/DDBJ databases">
        <title>Full-length cDNA from Arabidopsis thaliana.</title>
        <authorList>
            <person name="Brover V.V."/>
            <person name="Troukhan M.E."/>
            <person name="Alexandrov N.A."/>
            <person name="Lu Y.-P."/>
            <person name="Flavell R.B."/>
            <person name="Feldmann K.A."/>
        </authorList>
    </citation>
    <scope>NUCLEOTIDE SEQUENCE [LARGE SCALE MRNA]</scope>
</reference>
<reference key="6">
    <citation type="journal article" date="2006" name="Plant Cell">
        <title>Arabidopsis CULLIN4 forms an E3 ubiquitin ligase with RBX1 and the CDD complex in mediating light control of development.</title>
        <authorList>
            <person name="Chen H."/>
            <person name="Shen Y."/>
            <person name="Tang X."/>
            <person name="Yu L."/>
            <person name="Wang J."/>
            <person name="Guo L."/>
            <person name="Zhang Y."/>
            <person name="Zhang H."/>
            <person name="Feng S."/>
            <person name="Strickland E."/>
            <person name="Zheng N."/>
            <person name="Deng X.-W."/>
        </authorList>
    </citation>
    <scope>FUNCTION</scope>
    <scope>COMPONENT OF CUL4-RBX1-COP10-DDB1A-DET1 COMPLEX</scope>
    <scope>INTERACTION WITH CSN3; CSN4; CSN5; CSN8; CAND1; COP10; DDB1A AND RBX1</scope>
    <scope>SUBCELLULAR LOCATION</scope>
    <scope>NEDDYLATION</scope>
    <scope>DISRUPTION PHENOTYPE</scope>
</reference>
<reference key="7">
    <citation type="journal article" date="2006" name="Plant J.">
        <title>CUL4 associates with DDB1 and DET1 and its downregulation affects diverse aspects of development in Arabidopsis thaliana.</title>
        <authorList>
            <person name="Bernhardt A."/>
            <person name="Lechner E."/>
            <person name="Hano P."/>
            <person name="Schade V."/>
            <person name="Dieterle M."/>
            <person name="Anders M."/>
            <person name="Dubin M.J."/>
            <person name="Benvenuto G."/>
            <person name="Bowler C."/>
            <person name="Genschik P."/>
            <person name="Hellmann H."/>
        </authorList>
    </citation>
    <scope>FUNCTION</scope>
    <scope>INTERACTION WITH DDB1A; DDB1B; DET1 AND RBX1</scope>
    <scope>TISSUE SPECIFICITY</scope>
    <scope>DISRUPTION PHENOTYPE</scope>
</reference>
<reference key="8">
    <citation type="journal article" date="2008" name="Plant Cell">
        <title>Characterization of Arabidopsis and rice DWD proteins and their roles as substrate receptors for CUL4-RING E3 ubiquitin ligases.</title>
        <authorList>
            <person name="Lee J.H."/>
            <person name="Terzaghi W."/>
            <person name="Gusmaroli G."/>
            <person name="Charron J.B."/>
            <person name="Yoon H.J."/>
            <person name="Chen H."/>
            <person name="He Y.J."/>
            <person name="Xiong Y."/>
            <person name="Deng X.W."/>
        </authorList>
    </citation>
    <scope>FUNCTION</scope>
    <scope>COMPONENT OF THE CUL4-RBX1-DDB1-PRL1 COMPLEX</scope>
    <scope>INTERACTION WITH DDB1A</scope>
    <scope>DISRUPTION PHENOTYPE</scope>
</reference>
<reference key="9">
    <citation type="journal article" date="2008" name="Plant Cell">
        <title>Arabidopsis DDB1-CUL4 ASSOCIATED FACTOR1 forms a nuclear E3 ubiquitin ligase with DDB1 and CUL4 that is involved in multiple plant developmental processes.</title>
        <authorList>
            <person name="Zhang Y."/>
            <person name="Feng S."/>
            <person name="Chen F."/>
            <person name="Chen H."/>
            <person name="Wang J."/>
            <person name="McCall C."/>
            <person name="Xiong Y."/>
            <person name="Deng X.W."/>
        </authorList>
    </citation>
    <scope>FUNCTION</scope>
</reference>
<reference key="10">
    <citation type="journal article" date="2010" name="Plant Cell">
        <title>Arabidopsis CULLIN4-damaged DNA binding protein 1 interacts with CONSTITUTIVELY PHOTOMORPHOGENIC1-SUPPRESSOR OF PHYA complexes to regulate photomorphogenesis and flowering time.</title>
        <authorList>
            <person name="Chen H."/>
            <person name="Huang X."/>
            <person name="Gusmaroli G."/>
            <person name="Terzaghi W."/>
            <person name="Lau O.S."/>
            <person name="Yanagawa Y."/>
            <person name="Zhang Y."/>
            <person name="Li J."/>
            <person name="Lee J.H."/>
            <person name="Zhu D."/>
            <person name="Deng X.W."/>
        </authorList>
    </citation>
    <scope>FUNCTION</scope>
    <scope>COMPONENT OF CUL4-DDB1-COP1-SPA1 COMPLEX</scope>
    <scope>DISRUPTION PHENOTYPE</scope>
</reference>
<reference key="11">
    <citation type="journal article" date="2010" name="Plant Cell">
        <title>DWA1 and DWA2, two Arabidopsis DWD protein components of CUL4-based E3 ligases, act together as negative regulators in aba signal transduction.</title>
        <authorList>
            <person name="Lee J.H."/>
            <person name="Yoon H.J."/>
            <person name="Terzaghi W."/>
            <person name="Martinez C."/>
            <person name="Dai M."/>
            <person name="Li J."/>
            <person name="Byun M.O."/>
            <person name="Deng X.W."/>
        </authorList>
    </citation>
    <scope>FUNCTION</scope>
    <scope>COMPONENT OF THE CUL4-RBX1-DDB1-DWA1/DWA2 COMPLEX</scope>
</reference>
<organism>
    <name type="scientific">Arabidopsis thaliana</name>
    <name type="common">Mouse-ear cress</name>
    <dbReference type="NCBI Taxonomy" id="3702"/>
    <lineage>
        <taxon>Eukaryota</taxon>
        <taxon>Viridiplantae</taxon>
        <taxon>Streptophyta</taxon>
        <taxon>Embryophyta</taxon>
        <taxon>Tracheophyta</taxon>
        <taxon>Spermatophyta</taxon>
        <taxon>Magnoliopsida</taxon>
        <taxon>eudicotyledons</taxon>
        <taxon>Gunneridae</taxon>
        <taxon>Pentapetalae</taxon>
        <taxon>rosids</taxon>
        <taxon>malvids</taxon>
        <taxon>Brassicales</taxon>
        <taxon>Brassicaceae</taxon>
        <taxon>Camelineae</taxon>
        <taxon>Arabidopsis</taxon>
    </lineage>
</organism>
<name>CUL4_ARATH</name>
<keyword id="KW-0938">Abscisic acid signaling pathway</keyword>
<keyword id="KW-1017">Isopeptide bond</keyword>
<keyword id="KW-0539">Nucleus</keyword>
<keyword id="KW-1185">Reference proteome</keyword>
<keyword id="KW-0832">Ubl conjugation</keyword>
<keyword id="KW-0833">Ubl conjugation pathway</keyword>
<proteinExistence type="evidence at protein level"/>
<accession>Q8LGH4</accession>
<accession>Q84LL5</accession>
<accession>Q8RWT9</accession>
<accession>Q9FGP0</accession>
<feature type="chain" id="PRO_0000396851" description="Cullin-4">
    <location>
        <begin position="1"/>
        <end position="792"/>
    </location>
</feature>
<feature type="domain" description="Cullin neddylation" evidence="2">
    <location>
        <begin position="724"/>
        <end position="784"/>
    </location>
</feature>
<feature type="region of interest" description="Disordered" evidence="4">
    <location>
        <begin position="1"/>
        <end position="43"/>
    </location>
</feature>
<feature type="compositionally biased region" description="Polar residues" evidence="4">
    <location>
        <begin position="1"/>
        <end position="10"/>
    </location>
</feature>
<feature type="compositionally biased region" description="Low complexity" evidence="4">
    <location>
        <begin position="11"/>
        <end position="23"/>
    </location>
</feature>
<feature type="cross-link" description="Glycyl lysine isopeptide (Lys-Gly) (interchain with G-Cter in NEDD8)" evidence="1">
    <location>
        <position position="738"/>
    </location>
</feature>
<feature type="sequence conflict" description="In Ref. 4; AAM14063." evidence="11" ref="4">
    <original>A</original>
    <variation>T</variation>
    <location>
        <position position="29"/>
    </location>
</feature>
<gene>
    <name type="primary">CUL4</name>
    <name type="ordered locus">At5g46210</name>
    <name type="ORF">MDE13.3</name>
</gene>
<protein>
    <recommendedName>
        <fullName>Cullin-4</fullName>
        <shortName>AtCUL4</shortName>
    </recommendedName>
</protein>
<comment type="function">
    <text evidence="5 6 7 8 9 10">Component of the CUL4-RBX1-CDD (COP10-DDB1a-DET1) E3 ubiquitin-protein ligase complex which mediates the ubiquitination and subsequent proteasomal degradation of target proteins. Participates in the CDD complex to light-mediated control of development. May repress photomorphogenesis through enhancing COP1 E3 ubiquitin-protein ligase activity. Acts together with the CUL4-DDB1-COP1-SPA E3 ubiquitin-protein ligase complexes in the repression of photomorphogenesis and flowering time. Component ot the CUL4-RBX1-DDB1-PRL1 E3 ubiquitin-protein ligase complex which mediates ubiquitination and subsequent degradation of AKIN10. Component of the CUL4-RBX1-DDB1-DWA1/DWA2 E3 ubiquitin-protein ligase complex that acts as a negative regulator in abscisic acid (ABA) signaling and may target ABI5 for degradation.</text>
</comment>
<comment type="pathway">
    <text>Protein modification; protein ubiquitination.</text>
</comment>
<comment type="subunit">
    <text evidence="5 6 7">Interacts with COP10, CSN3, CSN4, CSN5, CSN8, DDB1A, DDB1B, DDB2, DET1 and RBX1.</text>
</comment>
<comment type="interaction">
    <interactant intactId="EBI-541750">
        <id>Q8LGH4</id>
    </interactant>
    <interactant intactId="EBI-602912">
        <id>Q8L5Y6</id>
        <label>CAND1</label>
    </interactant>
    <organismsDiffer>false</organismsDiffer>
    <experiments>2</experiments>
</comment>
<comment type="interaction">
    <interactant intactId="EBI-541750">
        <id>Q8LGH4</id>
    </interactant>
    <interactant intactId="EBI-2429853">
        <id>Q9LJD7</id>
        <label>COP10</label>
    </interactant>
    <organismsDiffer>false</organismsDiffer>
    <experiments>4</experiments>
</comment>
<comment type="interaction">
    <interactant intactId="EBI-541750">
        <id>Q8LGH4</id>
    </interactant>
    <interactant intactId="EBI-531055">
        <id>Q8W575</id>
        <label>CSN3</label>
    </interactant>
    <organismsDiffer>false</organismsDiffer>
    <experiments>2</experiments>
</comment>
<comment type="interaction">
    <interactant intactId="EBI-541750">
        <id>Q8LGH4</id>
    </interactant>
    <interactant intactId="EBI-531074">
        <id>Q8L5U0</id>
        <label>CSN4</label>
    </interactant>
    <organismsDiffer>false</organismsDiffer>
    <experiments>2</experiments>
</comment>
<comment type="interaction">
    <interactant intactId="EBI-541750">
        <id>Q8LGH4</id>
    </interactant>
    <interactant intactId="EBI-2429941">
        <id>Q9M086</id>
        <label>DCAF1</label>
    </interactant>
    <organismsDiffer>false</organismsDiffer>
    <experiments>2</experiments>
</comment>
<comment type="interaction">
    <interactant intactId="EBI-541750">
        <id>Q8LGH4</id>
    </interactant>
    <interactant intactId="EBI-1632780">
        <id>Q9M0V3</id>
        <label>DDB1A</label>
    </interactant>
    <organismsDiffer>false</organismsDiffer>
    <experiments>11</experiments>
</comment>
<comment type="interaction">
    <interactant intactId="EBI-541750">
        <id>Q8LGH4</id>
    </interactant>
    <interactant intactId="EBI-532404">
        <id>Q940X7</id>
        <label>RBX1A</label>
    </interactant>
    <organismsDiffer>false</organismsDiffer>
    <experiments>3</experiments>
</comment>
<comment type="interaction">
    <interactant intactId="EBI-541750">
        <id>Q8LGH4</id>
    </interactant>
    <interactant intactId="EBI-2029363">
        <id>Q9ZNU6</id>
        <label>DET1</label>
    </interactant>
    <organismsDiffer>true</organismsDiffer>
    <experiments>2</experiments>
</comment>
<comment type="subcellular location">
    <subcellularLocation>
        <location evidence="6">Nucleus</location>
    </subcellularLocation>
</comment>
<comment type="tissue specificity">
    <text evidence="5">Ubiquitous.</text>
</comment>
<comment type="PTM">
    <text evidence="6">Neddylated (rubylated). Deneddylated via its interaction with the COP9 signalosome (CSN) complex.</text>
</comment>
<comment type="disruption phenotype">
    <text evidence="5 6 7 9">Small plants with mishaped cotyledons and leaves. Reduction of the number and the size of lateral roots. Increased sensitivity to sugar, cytokinin and abscisic acid (ABA). Early flowering under short day (SD) conditions.</text>
</comment>
<comment type="similarity">
    <text evidence="3">Belongs to the cullin family.</text>
</comment>
<comment type="sequence caution" evidence="11">
    <conflict type="erroneous gene model prediction">
        <sequence resource="EMBL-CDS" id="BAB08502"/>
    </conflict>
</comment>
<comment type="sequence caution" evidence="11">
    <conflict type="erroneous initiation">
        <sequence resource="EMBL-CDS" id="CAC85265"/>
    </conflict>
    <text>Truncated N-terminus.</text>
</comment>
<evidence type="ECO:0000250" key="1">
    <source>
        <dbReference type="UniProtKB" id="Q13616"/>
    </source>
</evidence>
<evidence type="ECO:0000255" key="2"/>
<evidence type="ECO:0000255" key="3">
    <source>
        <dbReference type="PROSITE-ProRule" id="PRU00330"/>
    </source>
</evidence>
<evidence type="ECO:0000256" key="4">
    <source>
        <dbReference type="SAM" id="MobiDB-lite"/>
    </source>
</evidence>
<evidence type="ECO:0000269" key="5">
    <source>
    </source>
</evidence>
<evidence type="ECO:0000269" key="6">
    <source>
    </source>
</evidence>
<evidence type="ECO:0000269" key="7">
    <source>
    </source>
</evidence>
<evidence type="ECO:0000269" key="8">
    <source>
    </source>
</evidence>
<evidence type="ECO:0000269" key="9">
    <source>
    </source>
</evidence>
<evidence type="ECO:0000269" key="10">
    <source>
    </source>
</evidence>
<evidence type="ECO:0000305" key="11"/>
<sequence>MSLPTKRSTFSAASASDDSSYSSPPMKKAKNDLHHSPQHPNTADKVVGFHMEEDPTPAAANLSRKKATLPQPTKKFVIKLNKAKPTLPTNFEENTWEKLQSAIRAIFLKKKISFDLESLYQAVDNLCLHKLDGKLYDQIEKECEEHISAALQSLVGQNTDLTVFLSRVEKCWQDFCDQMLMIRSIALTLDRKYVIQNPNVRSLWEMGLQLFRKHLSLAPEVEQRTVKGLLSMIEKERLAEAVNRTLLSHLLKMFTALGIYMESFEKPFLEGTSEFYAAEGMKYMQQSDVPEYLKHVEGRLHEENERCILYIDAVTRKPLITTVERQLLERHILVVLEKGFTTLMDGRRTEDLQRMQTLFSRVNALESLRQALSSYVRKTGQKIVMDEEKDKDMVQSLLDFKASLDIIWEESFYKNESFGNTIKDSFEHLINLRQNRPAELIAKFLDEKLRAGNKGTSEEELESVLEKVLVLFRFIQGKDVFEAFYKKDLAKRLLLGKSASIDAEKSMISKLKTECGSQFTNKLEGMFKDIELSKEINESFKQSSQARTKLPSGIEMSVHVLTTGYWPTYPPMDVKLPHELNVYQDIFKEFYLSKYSGRRLMWQNSLGHCVLKADFSKGKKELAVSLFQAVVLMLFNDAMKLSFEDIKDSTSIEDKELRRTLQSLACGKVRVLQKNPKGRDVEDGDEFEFNDEFAAPLYRIKVNAIQMKETVEENTSTTERVFQDRQYQIDAAIVRIMKTRKVLSHTLLITELFQQLKFPIKPADLKKRIESLIDREYLEREKSNPQIYNYLA</sequence>